<evidence type="ECO:0000250" key="1">
    <source>
        <dbReference type="UniProtKB" id="Q65198"/>
    </source>
</evidence>
<evidence type="ECO:0000255" key="2"/>
<evidence type="ECO:0000305" key="3"/>
<name>VF199_ASFK5</name>
<comment type="function">
    <text evidence="1">Essential for viral fusion with host endosomal membrane and core release (By similarity). Not required for virus morphogenesis and egress (By similarity). Induces complete autophagy through the interaction with and down-regulation of host PYCR2 (By similarity).</text>
</comment>
<comment type="subunit">
    <text evidence="1">Interacts with host PYCR2; this interaction results in autophagy activation.</text>
</comment>
<comment type="subcellular location">
    <subcellularLocation>
        <location evidence="1">Virion membrane</location>
    </subcellularLocation>
    <subcellularLocation>
        <location evidence="3">Host membrane</location>
        <topology evidence="1">Single-pass membrane protein</topology>
    </subcellularLocation>
    <text evidence="1">Found in the perinuclear cytoplasmic viral factories during assembly (By similarity). Part of the virion inner membrane (By similarity).</text>
</comment>
<comment type="induction">
    <text evidence="3">Expressed in the late phase of the viral replicative cycle.</text>
</comment>
<comment type="similarity">
    <text evidence="3">Belongs to the asfivirus E199L family.</text>
</comment>
<proteinExistence type="inferred from homology"/>
<dbReference type="EMBL" id="AY261360">
    <property type="status" value="NOT_ANNOTATED_CDS"/>
    <property type="molecule type" value="Genomic_DNA"/>
</dbReference>
<dbReference type="SMR" id="P0CA94"/>
<dbReference type="Proteomes" id="UP000000861">
    <property type="component" value="Segment"/>
</dbReference>
<dbReference type="GO" id="GO:0033644">
    <property type="term" value="C:host cell membrane"/>
    <property type="evidence" value="ECO:0007669"/>
    <property type="project" value="UniProtKB-SubCell"/>
</dbReference>
<dbReference type="GO" id="GO:0016020">
    <property type="term" value="C:membrane"/>
    <property type="evidence" value="ECO:0007669"/>
    <property type="project" value="UniProtKB-KW"/>
</dbReference>
<dbReference type="GO" id="GO:0055036">
    <property type="term" value="C:virion membrane"/>
    <property type="evidence" value="ECO:0007669"/>
    <property type="project" value="UniProtKB-SubCell"/>
</dbReference>
<feature type="chain" id="PRO_0000373582" description="Inner membrane protein E199L">
    <location>
        <begin position="1"/>
        <end position="199"/>
    </location>
</feature>
<feature type="transmembrane region" description="Helical" evidence="2">
    <location>
        <begin position="150"/>
        <end position="170"/>
    </location>
</feature>
<feature type="glycosylation site" description="N-linked (GlcNAc...) asparagine; by host" evidence="2">
    <location>
        <position position="131"/>
    </location>
</feature>
<organism>
    <name type="scientific">African swine fever virus (isolate Pig/Kenya/KEN-50/1950)</name>
    <name type="common">ASFV</name>
    <dbReference type="NCBI Taxonomy" id="561445"/>
    <lineage>
        <taxon>Viruses</taxon>
        <taxon>Varidnaviria</taxon>
        <taxon>Bamfordvirae</taxon>
        <taxon>Nucleocytoviricota</taxon>
        <taxon>Pokkesviricetes</taxon>
        <taxon>Asfuvirales</taxon>
        <taxon>Asfarviridae</taxon>
        <taxon>Asfivirus</taxon>
        <taxon>African swine fever virus</taxon>
    </lineage>
</organism>
<protein>
    <recommendedName>
        <fullName>Inner membrane protein E199L</fullName>
        <shortName>pE199L</shortName>
    </recommendedName>
</protein>
<accession>P0CA94</accession>
<reference key="1">
    <citation type="submission" date="2003-03" db="EMBL/GenBank/DDBJ databases">
        <title>African swine fever virus genomes.</title>
        <authorList>
            <person name="Kutish G.F."/>
            <person name="Rock D.L."/>
        </authorList>
    </citation>
    <scope>NUCLEOTIDE SEQUENCE [LARGE SCALE GENOMIC DNA]</scope>
</reference>
<organismHost>
    <name type="scientific">Ornithodoros</name>
    <name type="common">relapsing fever ticks</name>
    <dbReference type="NCBI Taxonomy" id="6937"/>
</organismHost>
<organismHost>
    <name type="scientific">Phacochoerus aethiopicus</name>
    <name type="common">Warthog</name>
    <dbReference type="NCBI Taxonomy" id="85517"/>
</organismHost>
<organismHost>
    <name type="scientific">Phacochoerus africanus</name>
    <name type="common">Warthog</name>
    <dbReference type="NCBI Taxonomy" id="41426"/>
</organismHost>
<organismHost>
    <name type="scientific">Potamochoerus larvatus</name>
    <name type="common">Bushpig</name>
    <dbReference type="NCBI Taxonomy" id="273792"/>
</organismHost>
<organismHost>
    <name type="scientific">Sus scrofa</name>
    <name type="common">Pig</name>
    <dbReference type="NCBI Taxonomy" id="9823"/>
</organismHost>
<gene>
    <name type="ordered locus">Ken-142</name>
</gene>
<sequence length="199" mass="21945">MSCTPVSTKCNDIWIDFSCTGPSVSELQKKEPNAWAAILRSQKNQQTAEDDTIIGSICDKQGLCSKDEYAYSQYCACVNSGTLWAECAFAPCNGNKNAYKTTEQRNILTNKQCPSGLTICQNIAEYGGTGNISDLYQNFNCNSVINTFLINVMNHPFLTLILIILILVIIYRLMSSSAAKQNGDKLPPPSLIFSNLNNF</sequence>
<keyword id="KW-0325">Glycoprotein</keyword>
<keyword id="KW-1043">Host membrane</keyword>
<keyword id="KW-0426">Late protein</keyword>
<keyword id="KW-0472">Membrane</keyword>
<keyword id="KW-0812">Transmembrane</keyword>
<keyword id="KW-1133">Transmembrane helix</keyword>
<keyword id="KW-0946">Virion</keyword>